<accession>Q5F9X7</accession>
<evidence type="ECO:0000255" key="1">
    <source>
        <dbReference type="HAMAP-Rule" id="MF_00104"/>
    </source>
</evidence>
<comment type="function">
    <text evidence="1">Digests double-stranded RNA. Involved in the processing of primary rRNA transcript to yield the immediate precursors to the large and small rRNAs (23S and 16S). Processes some mRNAs, and tRNAs when they are encoded in the rRNA operon. Processes pre-crRNA and tracrRNA of type II CRISPR loci if present in the organism.</text>
</comment>
<comment type="catalytic activity">
    <reaction evidence="1">
        <text>Endonucleolytic cleavage to 5'-phosphomonoester.</text>
        <dbReference type="EC" id="3.1.26.3"/>
    </reaction>
</comment>
<comment type="cofactor">
    <cofactor evidence="1">
        <name>Mg(2+)</name>
        <dbReference type="ChEBI" id="CHEBI:18420"/>
    </cofactor>
</comment>
<comment type="subunit">
    <text evidence="1">Homodimer.</text>
</comment>
<comment type="subcellular location">
    <subcellularLocation>
        <location evidence="1">Cytoplasm</location>
    </subcellularLocation>
</comment>
<comment type="similarity">
    <text evidence="1">Belongs to the ribonuclease III family.</text>
</comment>
<protein>
    <recommendedName>
        <fullName evidence="1">Ribonuclease 3</fullName>
        <ecNumber evidence="1">3.1.26.3</ecNumber>
    </recommendedName>
    <alternativeName>
        <fullName evidence="1">Ribonuclease III</fullName>
        <shortName evidence="1">RNase III</shortName>
    </alternativeName>
</protein>
<keyword id="KW-0963">Cytoplasm</keyword>
<keyword id="KW-0255">Endonuclease</keyword>
<keyword id="KW-0378">Hydrolase</keyword>
<keyword id="KW-0460">Magnesium</keyword>
<keyword id="KW-0479">Metal-binding</keyword>
<keyword id="KW-0507">mRNA processing</keyword>
<keyword id="KW-0540">Nuclease</keyword>
<keyword id="KW-1185">Reference proteome</keyword>
<keyword id="KW-0694">RNA-binding</keyword>
<keyword id="KW-0698">rRNA processing</keyword>
<keyword id="KW-0699">rRNA-binding</keyword>
<keyword id="KW-0819">tRNA processing</keyword>
<gene>
    <name evidence="1" type="primary">rnc</name>
    <name type="ordered locus">NGO_0259</name>
</gene>
<dbReference type="EC" id="3.1.26.3" evidence="1"/>
<dbReference type="EMBL" id="AE004969">
    <property type="protein sequence ID" value="AAW89010.1"/>
    <property type="molecule type" value="Genomic_DNA"/>
</dbReference>
<dbReference type="RefSeq" id="WP_010951018.1">
    <property type="nucleotide sequence ID" value="NC_002946.2"/>
</dbReference>
<dbReference type="RefSeq" id="YP_207422.1">
    <property type="nucleotide sequence ID" value="NC_002946.2"/>
</dbReference>
<dbReference type="SMR" id="Q5F9X7"/>
<dbReference type="STRING" id="242231.NGO_0259"/>
<dbReference type="KEGG" id="ngo:NGO_0259"/>
<dbReference type="PATRIC" id="fig|242231.10.peg.319"/>
<dbReference type="HOGENOM" id="CLU_000907_1_1_4"/>
<dbReference type="Proteomes" id="UP000000535">
    <property type="component" value="Chromosome"/>
</dbReference>
<dbReference type="GO" id="GO:0005737">
    <property type="term" value="C:cytoplasm"/>
    <property type="evidence" value="ECO:0007669"/>
    <property type="project" value="UniProtKB-SubCell"/>
</dbReference>
<dbReference type="GO" id="GO:0003725">
    <property type="term" value="F:double-stranded RNA binding"/>
    <property type="evidence" value="ECO:0007669"/>
    <property type="project" value="TreeGrafter"/>
</dbReference>
<dbReference type="GO" id="GO:0046872">
    <property type="term" value="F:metal ion binding"/>
    <property type="evidence" value="ECO:0007669"/>
    <property type="project" value="UniProtKB-KW"/>
</dbReference>
<dbReference type="GO" id="GO:0004525">
    <property type="term" value="F:ribonuclease III activity"/>
    <property type="evidence" value="ECO:0007669"/>
    <property type="project" value="UniProtKB-UniRule"/>
</dbReference>
<dbReference type="GO" id="GO:0019843">
    <property type="term" value="F:rRNA binding"/>
    <property type="evidence" value="ECO:0007669"/>
    <property type="project" value="UniProtKB-KW"/>
</dbReference>
<dbReference type="GO" id="GO:0006397">
    <property type="term" value="P:mRNA processing"/>
    <property type="evidence" value="ECO:0007669"/>
    <property type="project" value="UniProtKB-UniRule"/>
</dbReference>
<dbReference type="GO" id="GO:0010468">
    <property type="term" value="P:regulation of gene expression"/>
    <property type="evidence" value="ECO:0007669"/>
    <property type="project" value="TreeGrafter"/>
</dbReference>
<dbReference type="GO" id="GO:0006364">
    <property type="term" value="P:rRNA processing"/>
    <property type="evidence" value="ECO:0007669"/>
    <property type="project" value="UniProtKB-UniRule"/>
</dbReference>
<dbReference type="GO" id="GO:0008033">
    <property type="term" value="P:tRNA processing"/>
    <property type="evidence" value="ECO:0007669"/>
    <property type="project" value="UniProtKB-KW"/>
</dbReference>
<dbReference type="CDD" id="cd10845">
    <property type="entry name" value="DSRM_RNAse_III_family"/>
    <property type="match status" value="1"/>
</dbReference>
<dbReference type="CDD" id="cd00593">
    <property type="entry name" value="RIBOc"/>
    <property type="match status" value="1"/>
</dbReference>
<dbReference type="FunFam" id="1.10.1520.10:FF:000001">
    <property type="entry name" value="Ribonuclease 3"/>
    <property type="match status" value="1"/>
</dbReference>
<dbReference type="Gene3D" id="3.30.160.20">
    <property type="match status" value="1"/>
</dbReference>
<dbReference type="Gene3D" id="1.10.1520.10">
    <property type="entry name" value="Ribonuclease III domain"/>
    <property type="match status" value="1"/>
</dbReference>
<dbReference type="HAMAP" id="MF_00104">
    <property type="entry name" value="RNase_III"/>
    <property type="match status" value="1"/>
</dbReference>
<dbReference type="InterPro" id="IPR014720">
    <property type="entry name" value="dsRBD_dom"/>
</dbReference>
<dbReference type="InterPro" id="IPR011907">
    <property type="entry name" value="RNase_III"/>
</dbReference>
<dbReference type="InterPro" id="IPR000999">
    <property type="entry name" value="RNase_III_dom"/>
</dbReference>
<dbReference type="InterPro" id="IPR036389">
    <property type="entry name" value="RNase_III_sf"/>
</dbReference>
<dbReference type="NCBIfam" id="TIGR02191">
    <property type="entry name" value="RNaseIII"/>
    <property type="match status" value="1"/>
</dbReference>
<dbReference type="PANTHER" id="PTHR11207:SF0">
    <property type="entry name" value="RIBONUCLEASE 3"/>
    <property type="match status" value="1"/>
</dbReference>
<dbReference type="PANTHER" id="PTHR11207">
    <property type="entry name" value="RIBONUCLEASE III"/>
    <property type="match status" value="1"/>
</dbReference>
<dbReference type="Pfam" id="PF00035">
    <property type="entry name" value="dsrm"/>
    <property type="match status" value="1"/>
</dbReference>
<dbReference type="Pfam" id="PF14622">
    <property type="entry name" value="Ribonucleas_3_3"/>
    <property type="match status" value="1"/>
</dbReference>
<dbReference type="SMART" id="SM00358">
    <property type="entry name" value="DSRM"/>
    <property type="match status" value="1"/>
</dbReference>
<dbReference type="SMART" id="SM00535">
    <property type="entry name" value="RIBOc"/>
    <property type="match status" value="1"/>
</dbReference>
<dbReference type="SUPFAM" id="SSF54768">
    <property type="entry name" value="dsRNA-binding domain-like"/>
    <property type="match status" value="1"/>
</dbReference>
<dbReference type="SUPFAM" id="SSF69065">
    <property type="entry name" value="RNase III domain-like"/>
    <property type="match status" value="1"/>
</dbReference>
<dbReference type="PROSITE" id="PS50137">
    <property type="entry name" value="DS_RBD"/>
    <property type="match status" value="1"/>
</dbReference>
<dbReference type="PROSITE" id="PS00517">
    <property type="entry name" value="RNASE_3_1"/>
    <property type="match status" value="1"/>
</dbReference>
<dbReference type="PROSITE" id="PS50142">
    <property type="entry name" value="RNASE_3_2"/>
    <property type="match status" value="1"/>
</dbReference>
<organism>
    <name type="scientific">Neisseria gonorrhoeae (strain ATCC 700825 / FA 1090)</name>
    <dbReference type="NCBI Taxonomy" id="242231"/>
    <lineage>
        <taxon>Bacteria</taxon>
        <taxon>Pseudomonadati</taxon>
        <taxon>Pseudomonadota</taxon>
        <taxon>Betaproteobacteria</taxon>
        <taxon>Neisseriales</taxon>
        <taxon>Neisseriaceae</taxon>
        <taxon>Neisseria</taxon>
    </lineage>
</organism>
<name>RNC_NEIG1</name>
<feature type="chain" id="PRO_0000228553" description="Ribonuclease 3">
    <location>
        <begin position="1"/>
        <end position="239"/>
    </location>
</feature>
<feature type="domain" description="RNase III" evidence="1">
    <location>
        <begin position="11"/>
        <end position="133"/>
    </location>
</feature>
<feature type="domain" description="DRBM" evidence="1">
    <location>
        <begin position="160"/>
        <end position="230"/>
    </location>
</feature>
<feature type="active site" evidence="1">
    <location>
        <position position="50"/>
    </location>
</feature>
<feature type="active site" evidence="1">
    <location>
        <position position="122"/>
    </location>
</feature>
<feature type="binding site" evidence="1">
    <location>
        <position position="46"/>
    </location>
    <ligand>
        <name>Mg(2+)</name>
        <dbReference type="ChEBI" id="CHEBI:18420"/>
    </ligand>
</feature>
<feature type="binding site" evidence="1">
    <location>
        <position position="119"/>
    </location>
    <ligand>
        <name>Mg(2+)</name>
        <dbReference type="ChEBI" id="CHEBI:18420"/>
    </ligand>
</feature>
<feature type="binding site" evidence="1">
    <location>
        <position position="122"/>
    </location>
    <ligand>
        <name>Mg(2+)</name>
        <dbReference type="ChEBI" id="CHEBI:18420"/>
    </ligand>
</feature>
<reference key="1">
    <citation type="submission" date="2003-03" db="EMBL/GenBank/DDBJ databases">
        <title>The complete genome sequence of Neisseria gonorrhoeae.</title>
        <authorList>
            <person name="Lewis L.A."/>
            <person name="Gillaspy A.F."/>
            <person name="McLaughlin R.E."/>
            <person name="Gipson M."/>
            <person name="Ducey T.F."/>
            <person name="Ownbey T."/>
            <person name="Hartman K."/>
            <person name="Nydick C."/>
            <person name="Carson M.B."/>
            <person name="Vaughn J."/>
            <person name="Thomson C."/>
            <person name="Song L."/>
            <person name="Lin S."/>
            <person name="Yuan X."/>
            <person name="Najar F."/>
            <person name="Zhan M."/>
            <person name="Ren Q."/>
            <person name="Zhu H."/>
            <person name="Qi S."/>
            <person name="Kenton S.M."/>
            <person name="Lai H."/>
            <person name="White J.D."/>
            <person name="Clifton S."/>
            <person name="Roe B.A."/>
            <person name="Dyer D.W."/>
        </authorList>
    </citation>
    <scope>NUCLEOTIDE SEQUENCE [LARGE SCALE GENOMIC DNA]</scope>
    <source>
        <strain>ATCC 700825 / FA 1090</strain>
    </source>
</reference>
<sequence>MKDDVLKRQAHTAIQKKLGYAFRDMSLLRRALTHRSHHAKHNERFEFVGDSILNYTVARMLFDAFPKLTEGELSRLRASLVNEGVLAEMAAEMNVGDGLYLGAGELKSSGFRRPSILADAMEAMFAAVSFDADFNTAEKVVRHLFAERVRRADFQNQAKDGKTALQEALQARRFALPKYRIEEQIGHADDSMFVISCDLGELGFVCRAKGTSRKAAEQEAAKEALKWLEEKLPLKKKKK</sequence>
<proteinExistence type="inferred from homology"/>